<comment type="function">
    <text evidence="1">Catalyzes the interconversion of beta-pyran and beta-furan forms of D-ribose.</text>
</comment>
<comment type="catalytic activity">
    <reaction evidence="1">
        <text>beta-D-ribopyranose = beta-D-ribofuranose</text>
        <dbReference type="Rhea" id="RHEA:25432"/>
        <dbReference type="ChEBI" id="CHEBI:27476"/>
        <dbReference type="ChEBI" id="CHEBI:47002"/>
        <dbReference type="EC" id="5.4.99.62"/>
    </reaction>
</comment>
<comment type="pathway">
    <text evidence="1">Carbohydrate metabolism; D-ribose degradation; D-ribose 5-phosphate from beta-D-ribopyranose: step 1/2.</text>
</comment>
<comment type="subunit">
    <text evidence="1">Homodecamer.</text>
</comment>
<comment type="subcellular location">
    <subcellularLocation>
        <location evidence="1">Cytoplasm</location>
    </subcellularLocation>
</comment>
<comment type="similarity">
    <text evidence="1">Belongs to the RbsD / FucU family. RbsD subfamily.</text>
</comment>
<dbReference type="EC" id="5.4.99.62" evidence="1"/>
<dbReference type="EMBL" id="CR378679">
    <property type="protein sequence ID" value="CAG23418.1"/>
    <property type="molecule type" value="Genomic_DNA"/>
</dbReference>
<dbReference type="RefSeq" id="WP_011221576.1">
    <property type="nucleotide sequence ID" value="NC_006371.1"/>
</dbReference>
<dbReference type="SMR" id="Q6LH12"/>
<dbReference type="STRING" id="298386.PBPRB1556"/>
<dbReference type="KEGG" id="ppr:PBPRB1556"/>
<dbReference type="eggNOG" id="COG1869">
    <property type="taxonomic scope" value="Bacteria"/>
</dbReference>
<dbReference type="HOGENOM" id="CLU_135498_0_0_6"/>
<dbReference type="UniPathway" id="UPA00916">
    <property type="reaction ID" value="UER00888"/>
</dbReference>
<dbReference type="Proteomes" id="UP000000593">
    <property type="component" value="Chromosome 2"/>
</dbReference>
<dbReference type="GO" id="GO:0005829">
    <property type="term" value="C:cytosol"/>
    <property type="evidence" value="ECO:0007669"/>
    <property type="project" value="TreeGrafter"/>
</dbReference>
<dbReference type="GO" id="GO:0062193">
    <property type="term" value="F:D-ribose pyranase activity"/>
    <property type="evidence" value="ECO:0007669"/>
    <property type="project" value="UniProtKB-EC"/>
</dbReference>
<dbReference type="GO" id="GO:0016872">
    <property type="term" value="F:intramolecular lyase activity"/>
    <property type="evidence" value="ECO:0007669"/>
    <property type="project" value="UniProtKB-UniRule"/>
</dbReference>
<dbReference type="GO" id="GO:0048029">
    <property type="term" value="F:monosaccharide binding"/>
    <property type="evidence" value="ECO:0007669"/>
    <property type="project" value="InterPro"/>
</dbReference>
<dbReference type="GO" id="GO:0019303">
    <property type="term" value="P:D-ribose catabolic process"/>
    <property type="evidence" value="ECO:0007669"/>
    <property type="project" value="UniProtKB-UniRule"/>
</dbReference>
<dbReference type="Gene3D" id="3.40.1650.10">
    <property type="entry name" value="RbsD-like domain"/>
    <property type="match status" value="1"/>
</dbReference>
<dbReference type="HAMAP" id="MF_01661">
    <property type="entry name" value="D_rib_pyranase"/>
    <property type="match status" value="1"/>
</dbReference>
<dbReference type="InterPro" id="IPR023064">
    <property type="entry name" value="D-ribose_pyranase"/>
</dbReference>
<dbReference type="InterPro" id="IPR023750">
    <property type="entry name" value="RbsD-like_sf"/>
</dbReference>
<dbReference type="InterPro" id="IPR007721">
    <property type="entry name" value="RbsD_FucU"/>
</dbReference>
<dbReference type="NCBIfam" id="NF008761">
    <property type="entry name" value="PRK11797.1"/>
    <property type="match status" value="1"/>
</dbReference>
<dbReference type="PANTHER" id="PTHR37831">
    <property type="entry name" value="D-RIBOSE PYRANASE"/>
    <property type="match status" value="1"/>
</dbReference>
<dbReference type="PANTHER" id="PTHR37831:SF1">
    <property type="entry name" value="D-RIBOSE PYRANASE"/>
    <property type="match status" value="1"/>
</dbReference>
<dbReference type="Pfam" id="PF05025">
    <property type="entry name" value="RbsD_FucU"/>
    <property type="match status" value="1"/>
</dbReference>
<dbReference type="SUPFAM" id="SSF102546">
    <property type="entry name" value="RbsD-like"/>
    <property type="match status" value="1"/>
</dbReference>
<name>RBSD_PHOPR</name>
<gene>
    <name evidence="1" type="primary">rbsD</name>
    <name type="ordered locus">PBPRB1556</name>
</gene>
<sequence>MKKNALINAELSYVVATLGHTDEITICDAGLPIPDETQRIDLALIPGVPTFIDTVKAVLGEMQIEGVVMAEEFAQVSPDLHQALIALIRNEELLCGKKITLSYVSHEAFKVHTQDSKAVIRTGECTPYANVIFQSGVVF</sequence>
<proteinExistence type="inferred from homology"/>
<accession>Q6LH12</accession>
<keyword id="KW-0119">Carbohydrate metabolism</keyword>
<keyword id="KW-0963">Cytoplasm</keyword>
<keyword id="KW-0413">Isomerase</keyword>
<keyword id="KW-1185">Reference proteome</keyword>
<organism>
    <name type="scientific">Photobacterium profundum (strain SS9)</name>
    <dbReference type="NCBI Taxonomy" id="298386"/>
    <lineage>
        <taxon>Bacteria</taxon>
        <taxon>Pseudomonadati</taxon>
        <taxon>Pseudomonadota</taxon>
        <taxon>Gammaproteobacteria</taxon>
        <taxon>Vibrionales</taxon>
        <taxon>Vibrionaceae</taxon>
        <taxon>Photobacterium</taxon>
    </lineage>
</organism>
<protein>
    <recommendedName>
        <fullName evidence="1">D-ribose pyranase</fullName>
        <ecNumber evidence="1">5.4.99.62</ecNumber>
    </recommendedName>
</protein>
<evidence type="ECO:0000255" key="1">
    <source>
        <dbReference type="HAMAP-Rule" id="MF_01661"/>
    </source>
</evidence>
<feature type="chain" id="PRO_0000346231" description="D-ribose pyranase">
    <location>
        <begin position="1"/>
        <end position="139"/>
    </location>
</feature>
<feature type="active site" description="Proton donor" evidence="1">
    <location>
        <position position="20"/>
    </location>
</feature>
<feature type="binding site" evidence="1">
    <location>
        <position position="28"/>
    </location>
    <ligand>
        <name>substrate</name>
    </ligand>
</feature>
<feature type="binding site" evidence="1">
    <location>
        <position position="106"/>
    </location>
    <ligand>
        <name>substrate</name>
    </ligand>
</feature>
<feature type="binding site" evidence="1">
    <location>
        <begin position="128"/>
        <end position="130"/>
    </location>
    <ligand>
        <name>substrate</name>
    </ligand>
</feature>
<reference key="1">
    <citation type="journal article" date="2005" name="Science">
        <title>Life at depth: Photobacterium profundum genome sequence and expression analysis.</title>
        <authorList>
            <person name="Vezzi A."/>
            <person name="Campanaro S."/>
            <person name="D'Angelo M."/>
            <person name="Simonato F."/>
            <person name="Vitulo N."/>
            <person name="Lauro F.M."/>
            <person name="Cestaro A."/>
            <person name="Malacrida G."/>
            <person name="Simionati B."/>
            <person name="Cannata N."/>
            <person name="Romualdi C."/>
            <person name="Bartlett D.H."/>
            <person name="Valle G."/>
        </authorList>
    </citation>
    <scope>NUCLEOTIDE SEQUENCE [LARGE SCALE GENOMIC DNA]</scope>
    <source>
        <strain>ATCC BAA-1253 / SS9</strain>
    </source>
</reference>